<gene>
    <name evidence="1" type="primary">ribH</name>
    <name type="ordered locus">HI_1303</name>
</gene>
<protein>
    <recommendedName>
        <fullName evidence="1">6,7-dimethyl-8-ribityllumazine synthase</fullName>
        <shortName evidence="1">DMRL synthase</shortName>
        <shortName evidence="1">LS</shortName>
        <shortName evidence="1">Lumazine synthase</shortName>
        <ecNumber evidence="1">2.5.1.78</ecNumber>
    </recommendedName>
</protein>
<reference key="1">
    <citation type="journal article" date="1995" name="Science">
        <title>Whole-genome random sequencing and assembly of Haemophilus influenzae Rd.</title>
        <authorList>
            <person name="Fleischmann R.D."/>
            <person name="Adams M.D."/>
            <person name="White O."/>
            <person name="Clayton R.A."/>
            <person name="Kirkness E.F."/>
            <person name="Kerlavage A.R."/>
            <person name="Bult C.J."/>
            <person name="Tomb J.-F."/>
            <person name="Dougherty B.A."/>
            <person name="Merrick J.M."/>
            <person name="McKenney K."/>
            <person name="Sutton G.G."/>
            <person name="FitzHugh W."/>
            <person name="Fields C.A."/>
            <person name="Gocayne J.D."/>
            <person name="Scott J.D."/>
            <person name="Shirley R."/>
            <person name="Liu L.-I."/>
            <person name="Glodek A."/>
            <person name="Kelley J.M."/>
            <person name="Weidman J.F."/>
            <person name="Phillips C.A."/>
            <person name="Spriggs T."/>
            <person name="Hedblom E."/>
            <person name="Cotton M.D."/>
            <person name="Utterback T.R."/>
            <person name="Hanna M.C."/>
            <person name="Nguyen D.T."/>
            <person name="Saudek D.M."/>
            <person name="Brandon R.C."/>
            <person name="Fine L.D."/>
            <person name="Fritchman J.L."/>
            <person name="Fuhrmann J.L."/>
            <person name="Geoghagen N.S.M."/>
            <person name="Gnehm C.L."/>
            <person name="McDonald L.A."/>
            <person name="Small K.V."/>
            <person name="Fraser C.M."/>
            <person name="Smith H.O."/>
            <person name="Venter J.C."/>
        </authorList>
    </citation>
    <scope>NUCLEOTIDE SEQUENCE [LARGE SCALE GENOMIC DNA]</scope>
    <source>
        <strain>ATCC 51907 / DSM 11121 / KW20 / Rd</strain>
    </source>
</reference>
<accession>P45149</accession>
<sequence>MKVLEGSVAAPNAKVAVVIARFNSFINESLLEGAIDALKRIGQVKDENITIVRTPGAYELPLVARRLAESKKFDAIVALGTVIRGGTAHFEYVAGEASSGLGKVAMDAEIPVAFGVLTTENIEQAIERAGTKAGNKGAEAALTALEMVNLIQQIDAA</sequence>
<dbReference type="EC" id="2.5.1.78" evidence="1"/>
<dbReference type="EMBL" id="L42023">
    <property type="protein sequence ID" value="AAC22950.1"/>
    <property type="status" value="ALT_INIT"/>
    <property type="molecule type" value="Genomic_DNA"/>
</dbReference>
<dbReference type="PIR" id="C64115">
    <property type="entry name" value="C64115"/>
</dbReference>
<dbReference type="RefSeq" id="NP_439454.2">
    <property type="nucleotide sequence ID" value="NC_000907.1"/>
</dbReference>
<dbReference type="SMR" id="P45149"/>
<dbReference type="STRING" id="71421.HI_1303"/>
<dbReference type="EnsemblBacteria" id="AAC22950">
    <property type="protein sequence ID" value="AAC22950"/>
    <property type="gene ID" value="HI_1303"/>
</dbReference>
<dbReference type="KEGG" id="hin:HI_1303"/>
<dbReference type="PATRIC" id="fig|71421.8.peg.1355"/>
<dbReference type="eggNOG" id="COG0054">
    <property type="taxonomic scope" value="Bacteria"/>
</dbReference>
<dbReference type="HOGENOM" id="CLU_089358_1_1_6"/>
<dbReference type="OrthoDB" id="9809709at2"/>
<dbReference type="PhylomeDB" id="P45149"/>
<dbReference type="BioCyc" id="HINF71421:G1GJ1-1328-MONOMER"/>
<dbReference type="BRENDA" id="2.5.1.78">
    <property type="organism ID" value="2529"/>
</dbReference>
<dbReference type="UniPathway" id="UPA00275">
    <property type="reaction ID" value="UER00404"/>
</dbReference>
<dbReference type="Proteomes" id="UP000000579">
    <property type="component" value="Chromosome"/>
</dbReference>
<dbReference type="GO" id="GO:0005737">
    <property type="term" value="C:cytoplasm"/>
    <property type="evidence" value="ECO:0000318"/>
    <property type="project" value="GO_Central"/>
</dbReference>
<dbReference type="GO" id="GO:0005829">
    <property type="term" value="C:cytosol"/>
    <property type="evidence" value="ECO:0000318"/>
    <property type="project" value="GO_Central"/>
</dbReference>
<dbReference type="GO" id="GO:0009349">
    <property type="term" value="C:riboflavin synthase complex"/>
    <property type="evidence" value="ECO:0007669"/>
    <property type="project" value="InterPro"/>
</dbReference>
<dbReference type="GO" id="GO:0000906">
    <property type="term" value="F:6,7-dimethyl-8-ribityllumazine synthase activity"/>
    <property type="evidence" value="ECO:0000318"/>
    <property type="project" value="GO_Central"/>
</dbReference>
<dbReference type="GO" id="GO:0009231">
    <property type="term" value="P:riboflavin biosynthetic process"/>
    <property type="evidence" value="ECO:0000318"/>
    <property type="project" value="GO_Central"/>
</dbReference>
<dbReference type="CDD" id="cd09209">
    <property type="entry name" value="Lumazine_synthase-I"/>
    <property type="match status" value="1"/>
</dbReference>
<dbReference type="FunFam" id="3.40.50.960:FF:000001">
    <property type="entry name" value="6,7-dimethyl-8-ribityllumazine synthase"/>
    <property type="match status" value="1"/>
</dbReference>
<dbReference type="Gene3D" id="3.40.50.960">
    <property type="entry name" value="Lumazine/riboflavin synthase"/>
    <property type="match status" value="1"/>
</dbReference>
<dbReference type="HAMAP" id="MF_00178">
    <property type="entry name" value="Lumazine_synth"/>
    <property type="match status" value="1"/>
</dbReference>
<dbReference type="InterPro" id="IPR034964">
    <property type="entry name" value="LS"/>
</dbReference>
<dbReference type="InterPro" id="IPR002180">
    <property type="entry name" value="LS/RS"/>
</dbReference>
<dbReference type="InterPro" id="IPR036467">
    <property type="entry name" value="LS/RS_sf"/>
</dbReference>
<dbReference type="NCBIfam" id="TIGR00114">
    <property type="entry name" value="lumazine-synth"/>
    <property type="match status" value="1"/>
</dbReference>
<dbReference type="NCBIfam" id="NF000812">
    <property type="entry name" value="PRK00061.1-4"/>
    <property type="match status" value="1"/>
</dbReference>
<dbReference type="PANTHER" id="PTHR21058:SF0">
    <property type="entry name" value="6,7-DIMETHYL-8-RIBITYLLUMAZINE SYNTHASE"/>
    <property type="match status" value="1"/>
</dbReference>
<dbReference type="PANTHER" id="PTHR21058">
    <property type="entry name" value="6,7-DIMETHYL-8-RIBITYLLUMAZINE SYNTHASE DMRL SYNTHASE LUMAZINE SYNTHASE"/>
    <property type="match status" value="1"/>
</dbReference>
<dbReference type="Pfam" id="PF00885">
    <property type="entry name" value="DMRL_synthase"/>
    <property type="match status" value="1"/>
</dbReference>
<dbReference type="SUPFAM" id="SSF52121">
    <property type="entry name" value="Lumazine synthase"/>
    <property type="match status" value="1"/>
</dbReference>
<comment type="function">
    <text evidence="1">Catalyzes the formation of 6,7-dimethyl-8-ribityllumazine by condensation of 5-amino-6-(D-ribitylamino)uracil with 3,4-dihydroxy-2-butanone 4-phosphate. This is the penultimate step in the biosynthesis of riboflavin.</text>
</comment>
<comment type="catalytic activity">
    <reaction evidence="1">
        <text>(2S)-2-hydroxy-3-oxobutyl phosphate + 5-amino-6-(D-ribitylamino)uracil = 6,7-dimethyl-8-(1-D-ribityl)lumazine + phosphate + 2 H2O + H(+)</text>
        <dbReference type="Rhea" id="RHEA:26152"/>
        <dbReference type="ChEBI" id="CHEBI:15377"/>
        <dbReference type="ChEBI" id="CHEBI:15378"/>
        <dbReference type="ChEBI" id="CHEBI:15934"/>
        <dbReference type="ChEBI" id="CHEBI:43474"/>
        <dbReference type="ChEBI" id="CHEBI:58201"/>
        <dbReference type="ChEBI" id="CHEBI:58830"/>
        <dbReference type="EC" id="2.5.1.78"/>
    </reaction>
</comment>
<comment type="pathway">
    <text evidence="1">Cofactor biosynthesis; riboflavin biosynthesis; riboflavin from 2-hydroxy-3-oxobutyl phosphate and 5-amino-6-(D-ribitylamino)uracil: step 1/2.</text>
</comment>
<comment type="subunit">
    <text evidence="1">Forms an icosahedral capsid composed of 60 subunits, arranged as a dodecamer of pentamers.</text>
</comment>
<comment type="similarity">
    <text evidence="1">Belongs to the DMRL synthase family.</text>
</comment>
<comment type="sequence caution" evidence="2">
    <conflict type="erroneous initiation">
        <sequence resource="EMBL-CDS" id="AAC22950"/>
    </conflict>
</comment>
<evidence type="ECO:0000255" key="1">
    <source>
        <dbReference type="HAMAP-Rule" id="MF_00178"/>
    </source>
</evidence>
<evidence type="ECO:0000305" key="2"/>
<proteinExistence type="inferred from homology"/>
<organism>
    <name type="scientific">Haemophilus influenzae (strain ATCC 51907 / DSM 11121 / KW20 / Rd)</name>
    <dbReference type="NCBI Taxonomy" id="71421"/>
    <lineage>
        <taxon>Bacteria</taxon>
        <taxon>Pseudomonadati</taxon>
        <taxon>Pseudomonadota</taxon>
        <taxon>Gammaproteobacteria</taxon>
        <taxon>Pasteurellales</taxon>
        <taxon>Pasteurellaceae</taxon>
        <taxon>Haemophilus</taxon>
    </lineage>
</organism>
<feature type="chain" id="PRO_0000134761" description="6,7-dimethyl-8-ribityllumazine synthase">
    <location>
        <begin position="1"/>
        <end position="157"/>
    </location>
</feature>
<feature type="active site" description="Proton donor" evidence="1">
    <location>
        <position position="89"/>
    </location>
</feature>
<feature type="binding site" evidence="1">
    <location>
        <position position="22"/>
    </location>
    <ligand>
        <name>5-amino-6-(D-ribitylamino)uracil</name>
        <dbReference type="ChEBI" id="CHEBI:15934"/>
    </ligand>
</feature>
<feature type="binding site" evidence="1">
    <location>
        <begin position="57"/>
        <end position="59"/>
    </location>
    <ligand>
        <name>5-amino-6-(D-ribitylamino)uracil</name>
        <dbReference type="ChEBI" id="CHEBI:15934"/>
    </ligand>
</feature>
<feature type="binding site" evidence="1">
    <location>
        <begin position="81"/>
        <end position="83"/>
    </location>
    <ligand>
        <name>5-amino-6-(D-ribitylamino)uracil</name>
        <dbReference type="ChEBI" id="CHEBI:15934"/>
    </ligand>
</feature>
<feature type="binding site" evidence="1">
    <location>
        <begin position="86"/>
        <end position="87"/>
    </location>
    <ligand>
        <name>(2S)-2-hydroxy-3-oxobutyl phosphate</name>
        <dbReference type="ChEBI" id="CHEBI:58830"/>
    </ligand>
</feature>
<feature type="binding site" evidence="1">
    <location>
        <position position="114"/>
    </location>
    <ligand>
        <name>5-amino-6-(D-ribitylamino)uracil</name>
        <dbReference type="ChEBI" id="CHEBI:15934"/>
    </ligand>
</feature>
<feature type="binding site" evidence="1">
    <location>
        <position position="128"/>
    </location>
    <ligand>
        <name>(2S)-2-hydroxy-3-oxobutyl phosphate</name>
        <dbReference type="ChEBI" id="CHEBI:58830"/>
    </ligand>
</feature>
<name>RISB_HAEIN</name>
<keyword id="KW-1185">Reference proteome</keyword>
<keyword id="KW-0686">Riboflavin biosynthesis</keyword>
<keyword id="KW-0808">Transferase</keyword>